<dbReference type="EC" id="1.2.1.88" evidence="1"/>
<dbReference type="EMBL" id="AP008934">
    <property type="protein sequence ID" value="BAE17456.1"/>
    <property type="molecule type" value="Genomic_DNA"/>
</dbReference>
<dbReference type="SMR" id="Q4A0E7"/>
<dbReference type="GeneID" id="3615883"/>
<dbReference type="KEGG" id="ssp:SSP0311"/>
<dbReference type="PATRIC" id="fig|342451.11.peg.314"/>
<dbReference type="eggNOG" id="COG1012">
    <property type="taxonomic scope" value="Bacteria"/>
</dbReference>
<dbReference type="HOGENOM" id="CLU_005391_0_0_9"/>
<dbReference type="OrthoDB" id="9762913at2"/>
<dbReference type="UniPathway" id="UPA00261">
    <property type="reaction ID" value="UER00374"/>
</dbReference>
<dbReference type="Proteomes" id="UP000006371">
    <property type="component" value="Chromosome"/>
</dbReference>
<dbReference type="GO" id="GO:0009898">
    <property type="term" value="C:cytoplasmic side of plasma membrane"/>
    <property type="evidence" value="ECO:0007669"/>
    <property type="project" value="TreeGrafter"/>
</dbReference>
<dbReference type="GO" id="GO:0003842">
    <property type="term" value="F:1-pyrroline-5-carboxylate dehydrogenase activity"/>
    <property type="evidence" value="ECO:0007669"/>
    <property type="project" value="UniProtKB-UniRule"/>
</dbReference>
<dbReference type="GO" id="GO:0006537">
    <property type="term" value="P:glutamate biosynthetic process"/>
    <property type="evidence" value="ECO:0007669"/>
    <property type="project" value="UniProtKB-UniRule"/>
</dbReference>
<dbReference type="GO" id="GO:0010133">
    <property type="term" value="P:proline catabolic process to glutamate"/>
    <property type="evidence" value="ECO:0007669"/>
    <property type="project" value="UniProtKB-UniPathway"/>
</dbReference>
<dbReference type="CDD" id="cd07124">
    <property type="entry name" value="ALDH_PutA-P5CDH-RocA"/>
    <property type="match status" value="1"/>
</dbReference>
<dbReference type="FunFam" id="3.40.309.10:FF:000005">
    <property type="entry name" value="1-pyrroline-5-carboxylate dehydrogenase 1"/>
    <property type="match status" value="1"/>
</dbReference>
<dbReference type="FunFam" id="3.40.605.10:FF:000045">
    <property type="entry name" value="1-pyrroline-5-carboxylate dehydrogenase 1"/>
    <property type="match status" value="1"/>
</dbReference>
<dbReference type="Gene3D" id="3.40.605.10">
    <property type="entry name" value="Aldehyde Dehydrogenase, Chain A, domain 1"/>
    <property type="match status" value="1"/>
</dbReference>
<dbReference type="Gene3D" id="3.40.309.10">
    <property type="entry name" value="Aldehyde Dehydrogenase, Chain A, domain 2"/>
    <property type="match status" value="1"/>
</dbReference>
<dbReference type="HAMAP" id="MF_00733">
    <property type="entry name" value="RocA"/>
    <property type="match status" value="1"/>
</dbReference>
<dbReference type="InterPro" id="IPR016161">
    <property type="entry name" value="Ald_DH/histidinol_DH"/>
</dbReference>
<dbReference type="InterPro" id="IPR016163">
    <property type="entry name" value="Ald_DH_C"/>
</dbReference>
<dbReference type="InterPro" id="IPR016160">
    <property type="entry name" value="Ald_DH_CS_CYS"/>
</dbReference>
<dbReference type="InterPro" id="IPR029510">
    <property type="entry name" value="Ald_DH_CS_GLU"/>
</dbReference>
<dbReference type="InterPro" id="IPR016162">
    <property type="entry name" value="Ald_DH_N"/>
</dbReference>
<dbReference type="InterPro" id="IPR015590">
    <property type="entry name" value="Aldehyde_DH_dom"/>
</dbReference>
<dbReference type="InterPro" id="IPR050485">
    <property type="entry name" value="Proline_metab_enzyme"/>
</dbReference>
<dbReference type="InterPro" id="IPR005932">
    <property type="entry name" value="RocA"/>
</dbReference>
<dbReference type="InterPro" id="IPR047597">
    <property type="entry name" value="RocA_bacillales"/>
</dbReference>
<dbReference type="NCBIfam" id="TIGR01237">
    <property type="entry name" value="D1pyr5carbox2"/>
    <property type="match status" value="1"/>
</dbReference>
<dbReference type="NCBIfam" id="NF002852">
    <property type="entry name" value="PRK03137.1"/>
    <property type="match status" value="1"/>
</dbReference>
<dbReference type="PANTHER" id="PTHR42862">
    <property type="entry name" value="DELTA-1-PYRROLINE-5-CARBOXYLATE DEHYDROGENASE 1, ISOFORM A-RELATED"/>
    <property type="match status" value="1"/>
</dbReference>
<dbReference type="PANTHER" id="PTHR42862:SF1">
    <property type="entry name" value="DELTA-1-PYRROLINE-5-CARBOXYLATE DEHYDROGENASE 2, ISOFORM A-RELATED"/>
    <property type="match status" value="1"/>
</dbReference>
<dbReference type="Pfam" id="PF00171">
    <property type="entry name" value="Aldedh"/>
    <property type="match status" value="1"/>
</dbReference>
<dbReference type="SUPFAM" id="SSF53720">
    <property type="entry name" value="ALDH-like"/>
    <property type="match status" value="1"/>
</dbReference>
<dbReference type="PROSITE" id="PS00070">
    <property type="entry name" value="ALDEHYDE_DEHYDR_CYS"/>
    <property type="match status" value="1"/>
</dbReference>
<dbReference type="PROSITE" id="PS00687">
    <property type="entry name" value="ALDEHYDE_DEHYDR_GLU"/>
    <property type="match status" value="1"/>
</dbReference>
<organism>
    <name type="scientific">Staphylococcus saprophyticus subsp. saprophyticus (strain ATCC 15305 / DSM 20229 / NCIMB 8711 / NCTC 7292 / S-41)</name>
    <dbReference type="NCBI Taxonomy" id="342451"/>
    <lineage>
        <taxon>Bacteria</taxon>
        <taxon>Bacillati</taxon>
        <taxon>Bacillota</taxon>
        <taxon>Bacilli</taxon>
        <taxon>Bacillales</taxon>
        <taxon>Staphylococcaceae</taxon>
        <taxon>Staphylococcus</taxon>
    </lineage>
</organism>
<evidence type="ECO:0000255" key="1">
    <source>
        <dbReference type="HAMAP-Rule" id="MF_00733"/>
    </source>
</evidence>
<gene>
    <name evidence="1" type="primary">rocA</name>
    <name type="ordered locus">SSP0311</name>
</gene>
<feature type="chain" id="PRO_0000056523" description="1-pyrroline-5-carboxylate dehydrogenase">
    <location>
        <begin position="1"/>
        <end position="514"/>
    </location>
</feature>
<feature type="active site" evidence="1">
    <location>
        <position position="286"/>
    </location>
</feature>
<feature type="active site" evidence="1">
    <location>
        <position position="320"/>
    </location>
</feature>
<sequence length="514" mass="56749">MVVNYHNEPSIDFTDSKNVESFKEALKKVKGELNQKIPLVINGEEKFTKDTYQSINPANTTEVIAEVSKATQKDVDDAFEAANEAYKSWKRWSHKDRAEFLIRVAAIIRRRKEEISAVMVYEAGKPWDEAVGDAAEGIDFIEYYARSMMELADGKPVLDREGEHNKYFYKPIGTGVTIPPWNFPFAIMAGTTLAPVVAGNTVLLKPAEDTPLTAYKLMEILEEAGLPKGVVNFVPGDPKEIGDYLVDSVHTHFVTFTGSRATGTRIFERAAKVQDGQQFLKRVIAEMGGKDAIVVDKDIDTDLAAESIVSSAFGFSGQKCSACSRAIVHKDVYDEVLEKAVALTKNLTVGNTENNTYMGPVINQKQFDKIKNYIEIGSKEGKLKQGGGTDDATGYFVEPTIIANLKSSDQIMQEEIFGPVVGFVKGKDFEELLEIANDTDYGLTGAVITNNRENWIEAVESYDVGNLYLNRGCTSAVVGYHPFGGFKMSGTDAKTGSPDYLLNFLEQKVVSEMF</sequence>
<comment type="catalytic activity">
    <reaction evidence="1">
        <text>L-glutamate 5-semialdehyde + NAD(+) + H2O = L-glutamate + NADH + 2 H(+)</text>
        <dbReference type="Rhea" id="RHEA:30235"/>
        <dbReference type="ChEBI" id="CHEBI:15377"/>
        <dbReference type="ChEBI" id="CHEBI:15378"/>
        <dbReference type="ChEBI" id="CHEBI:29985"/>
        <dbReference type="ChEBI" id="CHEBI:57540"/>
        <dbReference type="ChEBI" id="CHEBI:57945"/>
        <dbReference type="ChEBI" id="CHEBI:58066"/>
        <dbReference type="EC" id="1.2.1.88"/>
    </reaction>
</comment>
<comment type="pathway">
    <text evidence="1">Amino-acid degradation; L-proline degradation into L-glutamate; L-glutamate from L-proline: step 2/2.</text>
</comment>
<comment type="similarity">
    <text evidence="1">Belongs to the aldehyde dehydrogenase family. RocA subfamily.</text>
</comment>
<name>ROCA_STAS1</name>
<keyword id="KW-0520">NAD</keyword>
<keyword id="KW-0560">Oxidoreductase</keyword>
<keyword id="KW-1185">Reference proteome</keyword>
<accession>Q4A0E7</accession>
<reference key="1">
    <citation type="journal article" date="2005" name="Proc. Natl. Acad. Sci. U.S.A.">
        <title>Whole genome sequence of Staphylococcus saprophyticus reveals the pathogenesis of uncomplicated urinary tract infection.</title>
        <authorList>
            <person name="Kuroda M."/>
            <person name="Yamashita A."/>
            <person name="Hirakawa H."/>
            <person name="Kumano M."/>
            <person name="Morikawa K."/>
            <person name="Higashide M."/>
            <person name="Maruyama A."/>
            <person name="Inose Y."/>
            <person name="Matoba K."/>
            <person name="Toh H."/>
            <person name="Kuhara S."/>
            <person name="Hattori M."/>
            <person name="Ohta T."/>
        </authorList>
    </citation>
    <scope>NUCLEOTIDE SEQUENCE [LARGE SCALE GENOMIC DNA]</scope>
    <source>
        <strain>ATCC 15305 / DSM 20229 / NCIMB 8711 / NCTC 7292 / S-41</strain>
    </source>
</reference>
<proteinExistence type="inferred from homology"/>
<protein>
    <recommendedName>
        <fullName evidence="1">1-pyrroline-5-carboxylate dehydrogenase</fullName>
        <shortName evidence="1">P5C dehydrogenase</shortName>
        <ecNumber evidence="1">1.2.1.88</ecNumber>
    </recommendedName>
    <alternativeName>
        <fullName evidence="1">L-glutamate gamma-semialdehyde dehydrogenase</fullName>
    </alternativeName>
</protein>